<sequence>MEVSQFDNVSVVKKANLYFDGKCVSHTVLFPDGTRKTLGVIFPASLTFNTGAAEIMEINAGTCRVRLAGSEDWQAYGAGQQFSVPGNSSFDIEVQETLDYVCHFE</sequence>
<comment type="function">
    <text evidence="1">Catalyzes the phosphorolysis of diverse nucleosides, yielding D-ribose 1-phosphate and the respective free bases. Can use uridine, adenosine, guanosine, cytidine, thymidine, inosine and xanthosine as substrates. Also catalyzes the reverse reactions.</text>
</comment>
<comment type="catalytic activity">
    <reaction evidence="1">
        <text>a purine D-ribonucleoside + phosphate = a purine nucleobase + alpha-D-ribose 1-phosphate</text>
        <dbReference type="Rhea" id="RHEA:19805"/>
        <dbReference type="ChEBI" id="CHEBI:26386"/>
        <dbReference type="ChEBI" id="CHEBI:43474"/>
        <dbReference type="ChEBI" id="CHEBI:57720"/>
        <dbReference type="ChEBI" id="CHEBI:142355"/>
        <dbReference type="EC" id="2.4.2.1"/>
    </reaction>
</comment>
<comment type="catalytic activity">
    <reaction evidence="1">
        <text>adenosine + phosphate = alpha-D-ribose 1-phosphate + adenine</text>
        <dbReference type="Rhea" id="RHEA:27642"/>
        <dbReference type="ChEBI" id="CHEBI:16335"/>
        <dbReference type="ChEBI" id="CHEBI:16708"/>
        <dbReference type="ChEBI" id="CHEBI:43474"/>
        <dbReference type="ChEBI" id="CHEBI:57720"/>
        <dbReference type="EC" id="2.4.2.1"/>
    </reaction>
</comment>
<comment type="catalytic activity">
    <reaction evidence="1">
        <text>cytidine + phosphate = cytosine + alpha-D-ribose 1-phosphate</text>
        <dbReference type="Rhea" id="RHEA:52540"/>
        <dbReference type="ChEBI" id="CHEBI:16040"/>
        <dbReference type="ChEBI" id="CHEBI:17562"/>
        <dbReference type="ChEBI" id="CHEBI:43474"/>
        <dbReference type="ChEBI" id="CHEBI:57720"/>
        <dbReference type="EC" id="2.4.2.2"/>
    </reaction>
</comment>
<comment type="catalytic activity">
    <reaction evidence="1">
        <text>guanosine + phosphate = alpha-D-ribose 1-phosphate + guanine</text>
        <dbReference type="Rhea" id="RHEA:13233"/>
        <dbReference type="ChEBI" id="CHEBI:16235"/>
        <dbReference type="ChEBI" id="CHEBI:16750"/>
        <dbReference type="ChEBI" id="CHEBI:43474"/>
        <dbReference type="ChEBI" id="CHEBI:57720"/>
        <dbReference type="EC" id="2.4.2.1"/>
    </reaction>
</comment>
<comment type="catalytic activity">
    <reaction evidence="1">
        <text>inosine + phosphate = alpha-D-ribose 1-phosphate + hypoxanthine</text>
        <dbReference type="Rhea" id="RHEA:27646"/>
        <dbReference type="ChEBI" id="CHEBI:17368"/>
        <dbReference type="ChEBI" id="CHEBI:17596"/>
        <dbReference type="ChEBI" id="CHEBI:43474"/>
        <dbReference type="ChEBI" id="CHEBI:57720"/>
        <dbReference type="EC" id="2.4.2.1"/>
    </reaction>
</comment>
<comment type="catalytic activity">
    <reaction evidence="1">
        <text>thymidine + phosphate = 2-deoxy-alpha-D-ribose 1-phosphate + thymine</text>
        <dbReference type="Rhea" id="RHEA:16037"/>
        <dbReference type="ChEBI" id="CHEBI:17748"/>
        <dbReference type="ChEBI" id="CHEBI:17821"/>
        <dbReference type="ChEBI" id="CHEBI:43474"/>
        <dbReference type="ChEBI" id="CHEBI:57259"/>
        <dbReference type="EC" id="2.4.2.2"/>
    </reaction>
</comment>
<comment type="catalytic activity">
    <reaction evidence="1">
        <text>uridine + phosphate = alpha-D-ribose 1-phosphate + uracil</text>
        <dbReference type="Rhea" id="RHEA:24388"/>
        <dbReference type="ChEBI" id="CHEBI:16704"/>
        <dbReference type="ChEBI" id="CHEBI:17568"/>
        <dbReference type="ChEBI" id="CHEBI:43474"/>
        <dbReference type="ChEBI" id="CHEBI:57720"/>
        <dbReference type="EC" id="2.4.2.2"/>
    </reaction>
</comment>
<comment type="catalytic activity">
    <reaction evidence="1">
        <text>xanthosine + phosphate = alpha-D-ribose 1-phosphate + xanthine</text>
        <dbReference type="Rhea" id="RHEA:27638"/>
        <dbReference type="ChEBI" id="CHEBI:17712"/>
        <dbReference type="ChEBI" id="CHEBI:18107"/>
        <dbReference type="ChEBI" id="CHEBI:43474"/>
        <dbReference type="ChEBI" id="CHEBI:57720"/>
        <dbReference type="EC" id="2.4.2.1"/>
    </reaction>
</comment>
<comment type="similarity">
    <text evidence="1">Belongs to the nucleoside phosphorylase PpnP family.</text>
</comment>
<dbReference type="EC" id="2.4.2.1" evidence="1"/>
<dbReference type="EC" id="2.4.2.2" evidence="1"/>
<dbReference type="EMBL" id="CU633749">
    <property type="protein sequence ID" value="CAQ70468.1"/>
    <property type="molecule type" value="Genomic_DNA"/>
</dbReference>
<dbReference type="SMR" id="B3R6D5"/>
<dbReference type="KEGG" id="cti:RALTA_A2537"/>
<dbReference type="eggNOG" id="COG3123">
    <property type="taxonomic scope" value="Bacteria"/>
</dbReference>
<dbReference type="HOGENOM" id="CLU_157874_1_0_4"/>
<dbReference type="Proteomes" id="UP000001692">
    <property type="component" value="Chromosome 1"/>
</dbReference>
<dbReference type="GO" id="GO:0005829">
    <property type="term" value="C:cytosol"/>
    <property type="evidence" value="ECO:0007669"/>
    <property type="project" value="TreeGrafter"/>
</dbReference>
<dbReference type="GO" id="GO:0047975">
    <property type="term" value="F:guanosine phosphorylase activity"/>
    <property type="evidence" value="ECO:0007669"/>
    <property type="project" value="UniProtKB-EC"/>
</dbReference>
<dbReference type="GO" id="GO:0004731">
    <property type="term" value="F:purine-nucleoside phosphorylase activity"/>
    <property type="evidence" value="ECO:0007669"/>
    <property type="project" value="UniProtKB-UniRule"/>
</dbReference>
<dbReference type="GO" id="GO:0009032">
    <property type="term" value="F:thymidine phosphorylase activity"/>
    <property type="evidence" value="ECO:0007669"/>
    <property type="project" value="UniProtKB-EC"/>
</dbReference>
<dbReference type="GO" id="GO:0004850">
    <property type="term" value="F:uridine phosphorylase activity"/>
    <property type="evidence" value="ECO:0007669"/>
    <property type="project" value="UniProtKB-EC"/>
</dbReference>
<dbReference type="CDD" id="cd20296">
    <property type="entry name" value="cupin_PpnP-like"/>
    <property type="match status" value="1"/>
</dbReference>
<dbReference type="Gene3D" id="2.60.120.10">
    <property type="entry name" value="Jelly Rolls"/>
    <property type="match status" value="1"/>
</dbReference>
<dbReference type="HAMAP" id="MF_01537">
    <property type="entry name" value="Nucleos_phosphorylase_PpnP"/>
    <property type="match status" value="1"/>
</dbReference>
<dbReference type="InterPro" id="IPR009664">
    <property type="entry name" value="Ppnp"/>
</dbReference>
<dbReference type="InterPro" id="IPR014710">
    <property type="entry name" value="RmlC-like_jellyroll"/>
</dbReference>
<dbReference type="InterPro" id="IPR011051">
    <property type="entry name" value="RmlC_Cupin_sf"/>
</dbReference>
<dbReference type="PANTHER" id="PTHR36540">
    <property type="entry name" value="PYRIMIDINE/PURINE NUCLEOSIDE PHOSPHORYLASE"/>
    <property type="match status" value="1"/>
</dbReference>
<dbReference type="PANTHER" id="PTHR36540:SF1">
    <property type="entry name" value="PYRIMIDINE_PURINE NUCLEOSIDE PHOSPHORYLASE"/>
    <property type="match status" value="1"/>
</dbReference>
<dbReference type="Pfam" id="PF06865">
    <property type="entry name" value="Ppnp"/>
    <property type="match status" value="1"/>
</dbReference>
<dbReference type="SUPFAM" id="SSF51182">
    <property type="entry name" value="RmlC-like cupins"/>
    <property type="match status" value="1"/>
</dbReference>
<name>PPNP_CUPTR</name>
<reference key="1">
    <citation type="journal article" date="2008" name="Genome Res.">
        <title>Genome sequence of the beta-rhizobium Cupriavidus taiwanensis and comparative genomics of rhizobia.</title>
        <authorList>
            <person name="Amadou C."/>
            <person name="Pascal G."/>
            <person name="Mangenot S."/>
            <person name="Glew M."/>
            <person name="Bontemps C."/>
            <person name="Capela D."/>
            <person name="Carrere S."/>
            <person name="Cruveiller S."/>
            <person name="Dossat C."/>
            <person name="Lajus A."/>
            <person name="Marchetti M."/>
            <person name="Poinsot V."/>
            <person name="Rouy Z."/>
            <person name="Servin B."/>
            <person name="Saad M."/>
            <person name="Schenowitz C."/>
            <person name="Barbe V."/>
            <person name="Batut J."/>
            <person name="Medigue C."/>
            <person name="Masson-Boivin C."/>
        </authorList>
    </citation>
    <scope>NUCLEOTIDE SEQUENCE [LARGE SCALE GENOMIC DNA]</scope>
    <source>
        <strain>DSM 17343 / BCRC 17206 / CCUG 44338 / CIP 107171 / LMG 19424 / R1</strain>
    </source>
</reference>
<keyword id="KW-0328">Glycosyltransferase</keyword>
<keyword id="KW-0808">Transferase</keyword>
<gene>
    <name evidence="1" type="primary">ppnP</name>
    <name type="ordered locus">RALTA_A2537</name>
</gene>
<accession>B3R6D5</accession>
<proteinExistence type="inferred from homology"/>
<organism>
    <name type="scientific">Cupriavidus taiwanensis (strain DSM 17343 / BCRC 17206 / CCUG 44338 / CIP 107171 / LMG 19424 / R1)</name>
    <name type="common">Ralstonia taiwanensis (strain LMG 19424)</name>
    <dbReference type="NCBI Taxonomy" id="977880"/>
    <lineage>
        <taxon>Bacteria</taxon>
        <taxon>Pseudomonadati</taxon>
        <taxon>Pseudomonadota</taxon>
        <taxon>Betaproteobacteria</taxon>
        <taxon>Burkholderiales</taxon>
        <taxon>Burkholderiaceae</taxon>
        <taxon>Cupriavidus</taxon>
    </lineage>
</organism>
<evidence type="ECO:0000255" key="1">
    <source>
        <dbReference type="HAMAP-Rule" id="MF_01537"/>
    </source>
</evidence>
<protein>
    <recommendedName>
        <fullName evidence="1">Pyrimidine/purine nucleoside phosphorylase</fullName>
        <ecNumber evidence="1">2.4.2.1</ecNumber>
        <ecNumber evidence="1">2.4.2.2</ecNumber>
    </recommendedName>
    <alternativeName>
        <fullName evidence="1">Adenosine phosphorylase</fullName>
    </alternativeName>
    <alternativeName>
        <fullName evidence="1">Cytidine phosphorylase</fullName>
    </alternativeName>
    <alternativeName>
        <fullName evidence="1">Guanosine phosphorylase</fullName>
    </alternativeName>
    <alternativeName>
        <fullName evidence="1">Inosine phosphorylase</fullName>
    </alternativeName>
    <alternativeName>
        <fullName evidence="1">Thymidine phosphorylase</fullName>
    </alternativeName>
    <alternativeName>
        <fullName evidence="1">Uridine phosphorylase</fullName>
    </alternativeName>
    <alternativeName>
        <fullName evidence="1">Xanthosine phosphorylase</fullName>
    </alternativeName>
</protein>
<feature type="chain" id="PRO_1000198654" description="Pyrimidine/purine nucleoside phosphorylase">
    <location>
        <begin position="1"/>
        <end position="105"/>
    </location>
</feature>